<organism>
    <name type="scientific">Synechococcus sp. (strain CC9311)</name>
    <dbReference type="NCBI Taxonomy" id="64471"/>
    <lineage>
        <taxon>Bacteria</taxon>
        <taxon>Bacillati</taxon>
        <taxon>Cyanobacteriota</taxon>
        <taxon>Cyanophyceae</taxon>
        <taxon>Synechococcales</taxon>
        <taxon>Synechococcaceae</taxon>
        <taxon>Synechococcus</taxon>
    </lineage>
</organism>
<keyword id="KW-0001">2Fe-2S</keyword>
<keyword id="KW-1015">Disulfide bond</keyword>
<keyword id="KW-0249">Electron transport</keyword>
<keyword id="KW-0408">Iron</keyword>
<keyword id="KW-0411">Iron-sulfur</keyword>
<keyword id="KW-0472">Membrane</keyword>
<keyword id="KW-0479">Metal-binding</keyword>
<keyword id="KW-1185">Reference proteome</keyword>
<keyword id="KW-0793">Thylakoid</keyword>
<keyword id="KW-1278">Translocase</keyword>
<keyword id="KW-0812">Transmembrane</keyword>
<keyword id="KW-1133">Transmembrane helix</keyword>
<keyword id="KW-0813">Transport</keyword>
<dbReference type="EC" id="7.1.1.6" evidence="1"/>
<dbReference type="EMBL" id="CP000435">
    <property type="protein sequence ID" value="ABI46186.1"/>
    <property type="molecule type" value="Genomic_DNA"/>
</dbReference>
<dbReference type="RefSeq" id="WP_011620062.1">
    <property type="nucleotide sequence ID" value="NC_008319.1"/>
</dbReference>
<dbReference type="SMR" id="Q0I872"/>
<dbReference type="STRING" id="64471.sync_2149"/>
<dbReference type="KEGG" id="syg:sync_2149"/>
<dbReference type="eggNOG" id="COG0723">
    <property type="taxonomic scope" value="Bacteria"/>
</dbReference>
<dbReference type="HOGENOM" id="CLU_055690_8_0_3"/>
<dbReference type="OrthoDB" id="9767869at2"/>
<dbReference type="Proteomes" id="UP000001961">
    <property type="component" value="Chromosome"/>
</dbReference>
<dbReference type="GO" id="GO:0031676">
    <property type="term" value="C:plasma membrane-derived thylakoid membrane"/>
    <property type="evidence" value="ECO:0007669"/>
    <property type="project" value="UniProtKB-SubCell"/>
</dbReference>
<dbReference type="GO" id="GO:0051537">
    <property type="term" value="F:2 iron, 2 sulfur cluster binding"/>
    <property type="evidence" value="ECO:0007669"/>
    <property type="project" value="UniProtKB-KW"/>
</dbReference>
<dbReference type="GO" id="GO:0045158">
    <property type="term" value="F:electron transporter, transferring electrons within cytochrome b6/f complex of photosystem II activity"/>
    <property type="evidence" value="ECO:0007669"/>
    <property type="project" value="UniProtKB-UniRule"/>
</dbReference>
<dbReference type="GO" id="GO:0046872">
    <property type="term" value="F:metal ion binding"/>
    <property type="evidence" value="ECO:0007669"/>
    <property type="project" value="UniProtKB-KW"/>
</dbReference>
<dbReference type="GO" id="GO:0004497">
    <property type="term" value="F:monooxygenase activity"/>
    <property type="evidence" value="ECO:0007669"/>
    <property type="project" value="UniProtKB-ARBA"/>
</dbReference>
<dbReference type="GO" id="GO:0016705">
    <property type="term" value="F:oxidoreductase activity, acting on paired donors, with incorporation or reduction of molecular oxygen"/>
    <property type="evidence" value="ECO:0007669"/>
    <property type="project" value="UniProtKB-ARBA"/>
</dbReference>
<dbReference type="GO" id="GO:0009496">
    <property type="term" value="F:plastoquinol--plastocyanin reductase activity"/>
    <property type="evidence" value="ECO:0007669"/>
    <property type="project" value="UniProtKB-UniRule"/>
</dbReference>
<dbReference type="GO" id="GO:0015979">
    <property type="term" value="P:photosynthesis"/>
    <property type="evidence" value="ECO:0007669"/>
    <property type="project" value="UniProtKB-UniRule"/>
</dbReference>
<dbReference type="CDD" id="cd03471">
    <property type="entry name" value="Rieske_cytochrome_b6f"/>
    <property type="match status" value="1"/>
</dbReference>
<dbReference type="FunFam" id="2.102.10.10:FF:000007">
    <property type="entry name" value="Cytochrome b6-f complex iron-sulfur subunit"/>
    <property type="match status" value="1"/>
</dbReference>
<dbReference type="Gene3D" id="2.102.10.10">
    <property type="entry name" value="Rieske [2Fe-2S] iron-sulphur domain"/>
    <property type="match status" value="1"/>
</dbReference>
<dbReference type="Gene3D" id="1.20.5.700">
    <property type="entry name" value="Single helix bin"/>
    <property type="match status" value="1"/>
</dbReference>
<dbReference type="HAMAP" id="MF_01335">
    <property type="entry name" value="Cytb6_f_Rieske"/>
    <property type="match status" value="1"/>
</dbReference>
<dbReference type="InterPro" id="IPR023960">
    <property type="entry name" value="Cyt_b6_f_Rieske"/>
</dbReference>
<dbReference type="InterPro" id="IPR017941">
    <property type="entry name" value="Rieske_2Fe-2S"/>
</dbReference>
<dbReference type="InterPro" id="IPR036922">
    <property type="entry name" value="Rieske_2Fe-2S_sf"/>
</dbReference>
<dbReference type="InterPro" id="IPR014349">
    <property type="entry name" value="Rieske_Fe-S_prot"/>
</dbReference>
<dbReference type="InterPro" id="IPR005805">
    <property type="entry name" value="Rieske_Fe-S_prot_C"/>
</dbReference>
<dbReference type="InterPro" id="IPR006311">
    <property type="entry name" value="TAT_signal"/>
</dbReference>
<dbReference type="NCBIfam" id="NF045928">
    <property type="entry name" value="Cytb6fFeSPetC"/>
    <property type="match status" value="1"/>
</dbReference>
<dbReference type="NCBIfam" id="NF010001">
    <property type="entry name" value="PRK13474.1"/>
    <property type="match status" value="1"/>
</dbReference>
<dbReference type="PANTHER" id="PTHR10134">
    <property type="entry name" value="CYTOCHROME B-C1 COMPLEX SUBUNIT RIESKE, MITOCHONDRIAL"/>
    <property type="match status" value="1"/>
</dbReference>
<dbReference type="Pfam" id="PF00355">
    <property type="entry name" value="Rieske"/>
    <property type="match status" value="1"/>
</dbReference>
<dbReference type="Pfam" id="PF25471">
    <property type="entry name" value="TM_PetC"/>
    <property type="match status" value="1"/>
</dbReference>
<dbReference type="PRINTS" id="PR00162">
    <property type="entry name" value="RIESKE"/>
</dbReference>
<dbReference type="SUPFAM" id="SSF50022">
    <property type="entry name" value="ISP domain"/>
    <property type="match status" value="1"/>
</dbReference>
<dbReference type="PROSITE" id="PS51296">
    <property type="entry name" value="RIESKE"/>
    <property type="match status" value="1"/>
</dbReference>
<dbReference type="PROSITE" id="PS51318">
    <property type="entry name" value="TAT"/>
    <property type="match status" value="1"/>
</dbReference>
<comment type="function">
    <text evidence="1">Component of the cytochrome b6-f complex, which mediates electron transfer between photosystem II (PSII) and photosystem I (PSI), cyclic electron flow around PSI, and state transitions.</text>
</comment>
<comment type="catalytic activity">
    <reaction evidence="1">
        <text>2 oxidized [plastocyanin] + a plastoquinol + 2 H(+)(in) = 2 reduced [plastocyanin] + a plastoquinone + 4 H(+)(out)</text>
        <dbReference type="Rhea" id="RHEA:22148"/>
        <dbReference type="Rhea" id="RHEA-COMP:9561"/>
        <dbReference type="Rhea" id="RHEA-COMP:9562"/>
        <dbReference type="Rhea" id="RHEA-COMP:10039"/>
        <dbReference type="Rhea" id="RHEA-COMP:10040"/>
        <dbReference type="ChEBI" id="CHEBI:15378"/>
        <dbReference type="ChEBI" id="CHEBI:17757"/>
        <dbReference type="ChEBI" id="CHEBI:29036"/>
        <dbReference type="ChEBI" id="CHEBI:49552"/>
        <dbReference type="ChEBI" id="CHEBI:62192"/>
        <dbReference type="EC" id="7.1.1.6"/>
    </reaction>
</comment>
<comment type="cofactor">
    <cofactor evidence="1">
        <name>[2Fe-2S] cluster</name>
        <dbReference type="ChEBI" id="CHEBI:190135"/>
    </cofactor>
    <text evidence="1">Binds 1 [2Fe-2S] cluster per subunit.</text>
</comment>
<comment type="subunit">
    <text evidence="1">The 4 large subunits of the cytochrome b6-f complex are cytochrome b6, subunit IV (17 kDa polypeptide, PetD), cytochrome f and the Rieske protein, while the 4 small subunits are PetG, PetL, PetM and PetN. The complex functions as a dimer.</text>
</comment>
<comment type="subcellular location">
    <subcellularLocation>
        <location evidence="1">Cellular thylakoid membrane</location>
        <topology evidence="1">Single-pass membrane protein</topology>
    </subcellularLocation>
    <text evidence="1">The transmembrane helix obliquely spans the membrane in one monomer, and its extrinsic C-terminal domain is part of the other monomer.</text>
</comment>
<comment type="miscellaneous">
    <text>The Rieske iron-sulfur protein is a high potential 2Fe-2S protein.</text>
</comment>
<comment type="similarity">
    <text evidence="1">Belongs to the Rieske iron-sulfur protein family.</text>
</comment>
<gene>
    <name evidence="1" type="primary">petC</name>
    <name type="ordered locus">sync_2149</name>
</gene>
<protein>
    <recommendedName>
        <fullName evidence="1">Cytochrome b6-f complex iron-sulfur subunit</fullName>
        <ecNumber evidence="1">7.1.1.6</ecNumber>
    </recommendedName>
    <alternativeName>
        <fullName evidence="1">Plastohydroquinone:plastocyanin oxidoreductase iron-sulfur protein</fullName>
        <shortName evidence="1">ISP</shortName>
        <shortName evidence="1">RISP</shortName>
    </alternativeName>
    <alternativeName>
        <fullName evidence="1">Rieske iron-sulfur protein</fullName>
    </alternativeName>
</protein>
<name>UCRI_SYNS3</name>
<proteinExistence type="inferred from homology"/>
<sequence>MTQMPASDVPGMGRRQFMNLLTFGSVTGVALGALYPVANYFIPPRAAGGGGGTSAKDELGNSVTASGWLSSHAEGDRSLVQGLKGDPTYLIVEGVDAIGSYGINAICTHLGCVVPWNSGANKFMCPCHGSQYDATGKVVRGPAPLSLALANVSVDNDNVFVSQWTETDFRTGEKPWWS</sequence>
<accession>Q0I872</accession>
<evidence type="ECO:0000255" key="1">
    <source>
        <dbReference type="HAMAP-Rule" id="MF_01335"/>
    </source>
</evidence>
<feature type="chain" id="PRO_0000298462" description="Cytochrome b6-f complex iron-sulfur subunit">
    <location>
        <begin position="1"/>
        <end position="178"/>
    </location>
</feature>
<feature type="transmembrane region" description="Helical" evidence="1">
    <location>
        <begin position="20"/>
        <end position="42"/>
    </location>
</feature>
<feature type="domain" description="Rieske" evidence="1">
    <location>
        <begin position="65"/>
        <end position="161"/>
    </location>
</feature>
<feature type="binding site" evidence="1">
    <location>
        <position position="107"/>
    </location>
    <ligand>
        <name>[2Fe-2S] cluster</name>
        <dbReference type="ChEBI" id="CHEBI:190135"/>
    </ligand>
</feature>
<feature type="binding site" evidence="1">
    <location>
        <position position="109"/>
    </location>
    <ligand>
        <name>[2Fe-2S] cluster</name>
        <dbReference type="ChEBI" id="CHEBI:190135"/>
    </ligand>
</feature>
<feature type="binding site" evidence="1">
    <location>
        <position position="125"/>
    </location>
    <ligand>
        <name>[2Fe-2S] cluster</name>
        <dbReference type="ChEBI" id="CHEBI:190135"/>
    </ligand>
</feature>
<feature type="binding site" evidence="1">
    <location>
        <position position="128"/>
    </location>
    <ligand>
        <name>[2Fe-2S] cluster</name>
        <dbReference type="ChEBI" id="CHEBI:190135"/>
    </ligand>
</feature>
<feature type="disulfide bond" evidence="1">
    <location>
        <begin position="112"/>
        <end position="127"/>
    </location>
</feature>
<reference key="1">
    <citation type="journal article" date="2006" name="Proc. Natl. Acad. Sci. U.S.A.">
        <title>Genome sequence of Synechococcus CC9311: insights into adaptation to a coastal environment.</title>
        <authorList>
            <person name="Palenik B."/>
            <person name="Ren Q."/>
            <person name="Dupont C.L."/>
            <person name="Myers G.S."/>
            <person name="Heidelberg J.F."/>
            <person name="Badger J.H."/>
            <person name="Madupu R."/>
            <person name="Nelson W.C."/>
            <person name="Brinkac L.M."/>
            <person name="Dodson R.J."/>
            <person name="Durkin A.S."/>
            <person name="Daugherty S.C."/>
            <person name="Sullivan S.A."/>
            <person name="Khouri H."/>
            <person name="Mohamoud Y."/>
            <person name="Halpin R."/>
            <person name="Paulsen I.T."/>
        </authorList>
    </citation>
    <scope>NUCLEOTIDE SEQUENCE [LARGE SCALE GENOMIC DNA]</scope>
    <source>
        <strain>CC9311</strain>
    </source>
</reference>